<evidence type="ECO:0000255" key="1"/>
<evidence type="ECO:0000255" key="2">
    <source>
        <dbReference type="PROSITE-ProRule" id="PRU00074"/>
    </source>
</evidence>
<evidence type="ECO:0000305" key="3"/>
<name>Y1357_MYCTO</name>
<dbReference type="EMBL" id="AE000516">
    <property type="protein sequence ID" value="AAK45663.1"/>
    <property type="molecule type" value="Genomic_DNA"/>
</dbReference>
<dbReference type="PIR" id="D70741">
    <property type="entry name" value="D70741"/>
</dbReference>
<dbReference type="RefSeq" id="WP_003406987.1">
    <property type="nucleotide sequence ID" value="NZ_KK341227.1"/>
</dbReference>
<dbReference type="SMR" id="P9WM06"/>
<dbReference type="KEGG" id="mtc:MT1400"/>
<dbReference type="PATRIC" id="fig|83331.31.peg.1507"/>
<dbReference type="HOGENOM" id="CLU_000445_70_50_11"/>
<dbReference type="Proteomes" id="UP000001020">
    <property type="component" value="Chromosome"/>
</dbReference>
<dbReference type="GO" id="GO:0005886">
    <property type="term" value="C:plasma membrane"/>
    <property type="evidence" value="ECO:0007669"/>
    <property type="project" value="UniProtKB-SubCell"/>
</dbReference>
<dbReference type="GO" id="GO:0071111">
    <property type="term" value="F:cyclic-guanylate-specific phosphodiesterase activity"/>
    <property type="evidence" value="ECO:0007669"/>
    <property type="project" value="InterPro"/>
</dbReference>
<dbReference type="CDD" id="cd01948">
    <property type="entry name" value="EAL"/>
    <property type="match status" value="1"/>
</dbReference>
<dbReference type="Gene3D" id="3.20.20.450">
    <property type="entry name" value="EAL domain"/>
    <property type="match status" value="1"/>
</dbReference>
<dbReference type="InterPro" id="IPR050706">
    <property type="entry name" value="Cyclic-di-GMP_PDE-like"/>
</dbReference>
<dbReference type="InterPro" id="IPR001633">
    <property type="entry name" value="EAL_dom"/>
</dbReference>
<dbReference type="InterPro" id="IPR035919">
    <property type="entry name" value="EAL_sf"/>
</dbReference>
<dbReference type="PANTHER" id="PTHR33121">
    <property type="entry name" value="CYCLIC DI-GMP PHOSPHODIESTERASE PDEF"/>
    <property type="match status" value="1"/>
</dbReference>
<dbReference type="PANTHER" id="PTHR33121:SF70">
    <property type="entry name" value="SIGNALING PROTEIN YKOW"/>
    <property type="match status" value="1"/>
</dbReference>
<dbReference type="Pfam" id="PF00563">
    <property type="entry name" value="EAL"/>
    <property type="match status" value="1"/>
</dbReference>
<dbReference type="SMART" id="SM00052">
    <property type="entry name" value="EAL"/>
    <property type="match status" value="1"/>
</dbReference>
<dbReference type="SUPFAM" id="SSF141868">
    <property type="entry name" value="EAL domain-like"/>
    <property type="match status" value="1"/>
</dbReference>
<dbReference type="PROSITE" id="PS50883">
    <property type="entry name" value="EAL"/>
    <property type="match status" value="1"/>
</dbReference>
<sequence>MDRCCQRATAFACALRPTKLIDYEEMFRGAMQARAMVANPDQWADSDRDQVNTRHYLSTSMRVALDRGEFFLVYQPIIRLADNRIIGAEALLRWEHPTLGTLLPGRFIDRAENNGLMVPLTAFVLEQACRHVRSWRDHSTDPQPFVSVNVSASTICDPGFLVLVEGVLGETGLPAHALQLELAEDARLSRDEKAVTRLQELSALGVGIAIDDFGIGFSSLAYLPRLPVDVVKLGGKFIECLDGDIQARLANEQITRAMIDLGDKLGITVTAKLVETPSQAARLRAFGCKAAQGWHFAKALPVDFFRE</sequence>
<feature type="chain" id="PRO_0000427387" description="Uncharacterized protein MT1400">
    <location>
        <begin position="1"/>
        <end position="307"/>
    </location>
</feature>
<feature type="transmembrane region" description="Helical" evidence="1">
    <location>
        <begin position="158"/>
        <end position="178"/>
    </location>
</feature>
<feature type="transmembrane region" description="Helical" evidence="1">
    <location>
        <begin position="203"/>
        <end position="223"/>
    </location>
</feature>
<feature type="domain" description="EAL" evidence="2">
    <location>
        <begin position="54"/>
        <end position="307"/>
    </location>
</feature>
<proteinExistence type="predicted"/>
<reference key="1">
    <citation type="journal article" date="2002" name="J. Bacteriol.">
        <title>Whole-genome comparison of Mycobacterium tuberculosis clinical and laboratory strains.</title>
        <authorList>
            <person name="Fleischmann R.D."/>
            <person name="Alland D."/>
            <person name="Eisen J.A."/>
            <person name="Carpenter L."/>
            <person name="White O."/>
            <person name="Peterson J.D."/>
            <person name="DeBoy R.T."/>
            <person name="Dodson R.J."/>
            <person name="Gwinn M.L."/>
            <person name="Haft D.H."/>
            <person name="Hickey E.K."/>
            <person name="Kolonay J.F."/>
            <person name="Nelson W.C."/>
            <person name="Umayam L.A."/>
            <person name="Ermolaeva M.D."/>
            <person name="Salzberg S.L."/>
            <person name="Delcher A."/>
            <person name="Utterback T.R."/>
            <person name="Weidman J.F."/>
            <person name="Khouri H.M."/>
            <person name="Gill J."/>
            <person name="Mikula A."/>
            <person name="Bishai W."/>
            <person name="Jacobs W.R. Jr."/>
            <person name="Venter J.C."/>
            <person name="Fraser C.M."/>
        </authorList>
    </citation>
    <scope>NUCLEOTIDE SEQUENCE [LARGE SCALE GENOMIC DNA]</scope>
    <source>
        <strain>CDC 1551 / Oshkosh</strain>
    </source>
</reference>
<gene>
    <name type="ordered locus">MT1400</name>
</gene>
<accession>P9WM06</accession>
<accession>L0T814</accession>
<accession>P64829</accession>
<accession>Q11027</accession>
<organism>
    <name type="scientific">Mycobacterium tuberculosis (strain CDC 1551 / Oshkosh)</name>
    <dbReference type="NCBI Taxonomy" id="83331"/>
    <lineage>
        <taxon>Bacteria</taxon>
        <taxon>Bacillati</taxon>
        <taxon>Actinomycetota</taxon>
        <taxon>Actinomycetes</taxon>
        <taxon>Mycobacteriales</taxon>
        <taxon>Mycobacteriaceae</taxon>
        <taxon>Mycobacterium</taxon>
        <taxon>Mycobacterium tuberculosis complex</taxon>
    </lineage>
</organism>
<protein>
    <recommendedName>
        <fullName>Uncharacterized protein MT1400</fullName>
    </recommendedName>
</protein>
<comment type="subcellular location">
    <subcellularLocation>
        <location evidence="3">Cell membrane</location>
        <topology evidence="3">Multi-pass membrane protein</topology>
    </subcellularLocation>
</comment>
<keyword id="KW-1003">Cell membrane</keyword>
<keyword id="KW-0472">Membrane</keyword>
<keyword id="KW-1185">Reference proteome</keyword>
<keyword id="KW-0812">Transmembrane</keyword>
<keyword id="KW-1133">Transmembrane helix</keyword>